<proteinExistence type="evidence at transcript level"/>
<keyword id="KW-0966">Cell projection</keyword>
<keyword id="KW-0963">Cytoplasm</keyword>
<keyword id="KW-0206">Cytoskeleton</keyword>
<keyword id="KW-1185">Reference proteome</keyword>
<dbReference type="EMBL" id="BC122153">
    <property type="protein sequence ID" value="AAI22154.1"/>
    <property type="molecule type" value="mRNA"/>
</dbReference>
<dbReference type="EMBL" id="BC131879">
    <property type="protein sequence ID" value="AAI31880.1"/>
    <property type="molecule type" value="mRNA"/>
</dbReference>
<dbReference type="FunCoup" id="A2RRW4">
    <property type="interactions" value="1200"/>
</dbReference>
<dbReference type="IntAct" id="A2RRW4">
    <property type="interactions" value="2"/>
</dbReference>
<dbReference type="MINT" id="A2RRW4"/>
<dbReference type="STRING" id="7955.ENSDARP00000130067"/>
<dbReference type="PaxDb" id="7955-ENSDARP00000099646"/>
<dbReference type="PeptideAtlas" id="A2RRW4"/>
<dbReference type="AGR" id="ZFIN:ZDB-GENE-070209-41"/>
<dbReference type="ZFIN" id="ZDB-GENE-070209-41">
    <property type="gene designation" value="cimip2b"/>
</dbReference>
<dbReference type="eggNOG" id="ENOG502RTSD">
    <property type="taxonomic scope" value="Eukaryota"/>
</dbReference>
<dbReference type="InParanoid" id="A2RRW4"/>
<dbReference type="PhylomeDB" id="A2RRW4"/>
<dbReference type="PRO" id="PR:A2RRW4"/>
<dbReference type="Proteomes" id="UP000000437">
    <property type="component" value="Unplaced"/>
</dbReference>
<dbReference type="GO" id="GO:0005879">
    <property type="term" value="C:axonemal microtubule"/>
    <property type="evidence" value="ECO:0000250"/>
    <property type="project" value="UniProtKB"/>
</dbReference>
<dbReference type="InterPro" id="IPR018902">
    <property type="entry name" value="CMI2A-C-like_dom"/>
</dbReference>
<dbReference type="PANTHER" id="PTHR22146">
    <property type="entry name" value="CAT EYE SYNDROME CRITICAL REGION PROTEIN 6"/>
    <property type="match status" value="1"/>
</dbReference>
<dbReference type="PANTHER" id="PTHR22146:SF8">
    <property type="entry name" value="PROTEIN FAM166B"/>
    <property type="match status" value="1"/>
</dbReference>
<dbReference type="Pfam" id="PF10629">
    <property type="entry name" value="CMI2B-like"/>
    <property type="match status" value="2"/>
</dbReference>
<reference key="1">
    <citation type="submission" date="2007-01" db="EMBL/GenBank/DDBJ databases">
        <authorList>
            <consortium name="NIH - Zebrafish Gene Collection (ZGC) project"/>
        </authorList>
    </citation>
    <scope>NUCLEOTIDE SEQUENCE [LARGE SCALE MRNA]</scope>
    <source>
        <tissue>Olfactory epithelium</tissue>
    </source>
</reference>
<protein>
    <recommendedName>
        <fullName>Ciliary microtubule inner protein 2B</fullName>
    </recommendedName>
</protein>
<gene>
    <name type="primary">cimip2b</name>
    <name type="synonym">fam166b</name>
    <name type="ORF">zgc:158652</name>
</gene>
<organism>
    <name type="scientific">Danio rerio</name>
    <name type="common">Zebrafish</name>
    <name type="synonym">Brachydanio rerio</name>
    <dbReference type="NCBI Taxonomy" id="7955"/>
    <lineage>
        <taxon>Eukaryota</taxon>
        <taxon>Metazoa</taxon>
        <taxon>Chordata</taxon>
        <taxon>Craniata</taxon>
        <taxon>Vertebrata</taxon>
        <taxon>Euteleostomi</taxon>
        <taxon>Actinopterygii</taxon>
        <taxon>Neopterygii</taxon>
        <taxon>Teleostei</taxon>
        <taxon>Ostariophysi</taxon>
        <taxon>Cypriniformes</taxon>
        <taxon>Danionidae</taxon>
        <taxon>Danioninae</taxon>
        <taxon>Danio</taxon>
    </lineage>
</organism>
<sequence length="299" mass="33273">MDLFPPKFSKVLVTPDPQYIPGYAGYCPQLKYHVGQTYGQLTAKLLTSPEVSHSQRLVLQTSPLSSTEKETASRSQIWWSRHGASRNLETMIPGYTGFVPLRQNYICKTYAETCRDALSEFNQGQAKRLHNASADLSFPVINSVPDFRPRRSNSPLIALSKDPAPYKAPDPWKPPGSPYFMEDSSPHKYFISGFTGYVPKARFLFGTGYPTITNKALIQFSKEMKAGPASLQKYSLQEEDSSNLPLIPTIYPSKTGLLPSYTGHIPGYRFQYGHTFGKLTHNALGHTASQKNAGAIRLS</sequence>
<evidence type="ECO:0000250" key="1">
    <source>
        <dbReference type="UniProtKB" id="A8MTA8"/>
    </source>
</evidence>
<evidence type="ECO:0000305" key="2"/>
<feature type="chain" id="PRO_0000342385" description="Ciliary microtubule inner protein 2B">
    <location>
        <begin position="1"/>
        <end position="299"/>
    </location>
</feature>
<feature type="sequence conflict" description="In Ref. 1; AAI22154." evidence="2" ref="1">
    <original>V</original>
    <variation>A</variation>
    <location>
        <position position="99"/>
    </location>
</feature>
<feature type="sequence conflict" description="In Ref. 1; AAI22154." evidence="2" ref="1">
    <original>N</original>
    <variation>D</variation>
    <location>
        <position position="243"/>
    </location>
</feature>
<comment type="function">
    <text evidence="1">Microtubule inner protein (MIP) part of the dynein-decorated doublet microtubules (DMTs) in cilia axoneme, which is required for motile cilia beating.</text>
</comment>
<comment type="subcellular location">
    <subcellularLocation>
        <location evidence="1">Cytoplasm</location>
        <location evidence="1">Cytoskeleton</location>
        <location evidence="1">Cilium axoneme</location>
    </subcellularLocation>
</comment>
<comment type="tissue specificity">
    <text evidence="1">Expressed in airway epithelial cells.</text>
</comment>
<comment type="similarity">
    <text evidence="2">Belongs to the CIMIP2 family.</text>
</comment>
<accession>A2RRW4</accession>
<accession>Q0P4C8</accession>
<name>CMI2B_DANRE</name>